<name>RER1_HUMAN</name>
<protein>
    <recommendedName>
        <fullName>Protein RER1</fullName>
    </recommendedName>
</protein>
<reference key="1">
    <citation type="journal article" date="1997" name="Eur. J. Cell Biol.">
        <title>Human Rer1 is localized to the Golgi apparatus and complements the deletion of the homologous Rer1 protein of Saccharomyces cerevisiae.</title>
        <authorList>
            <person name="Fuellekrug J."/>
            <person name="Boehm J."/>
            <person name="Roettger S."/>
            <person name="Nilsson T."/>
            <person name="Mieskes G."/>
            <person name="Schmitt H."/>
        </authorList>
    </citation>
    <scope>NUCLEOTIDE SEQUENCE [MRNA]</scope>
    <source>
        <tissue>Mammary cancer</tissue>
    </source>
</reference>
<reference key="2">
    <citation type="submission" date="1998-08" db="EMBL/GenBank/DDBJ databases">
        <title>Full-insert sequence of mapped XREF EST.</title>
        <authorList>
            <person name="Barrow I.K.-P."/>
            <person name="Boguski M.S."/>
            <person name="Touchman J.W."/>
            <person name="Spencer F."/>
        </authorList>
    </citation>
    <scope>NUCLEOTIDE SEQUENCE [LARGE SCALE MRNA]</scope>
</reference>
<reference key="3">
    <citation type="journal article" date="2004" name="Genome Res.">
        <title>The status, quality, and expansion of the NIH full-length cDNA project: the Mammalian Gene Collection (MGC).</title>
        <authorList>
            <consortium name="The MGC Project Team"/>
        </authorList>
    </citation>
    <scope>NUCLEOTIDE SEQUENCE [LARGE SCALE MRNA]</scope>
    <source>
        <tissue>Skin</tissue>
    </source>
</reference>
<reference key="4">
    <citation type="journal article" date="2008" name="Mol. Cell">
        <title>Kinase-selective enrichment enables quantitative phosphoproteomics of the kinome across the cell cycle.</title>
        <authorList>
            <person name="Daub H."/>
            <person name="Olsen J.V."/>
            <person name="Bairlein M."/>
            <person name="Gnad F."/>
            <person name="Oppermann F.S."/>
            <person name="Korner R."/>
            <person name="Greff Z."/>
            <person name="Keri G."/>
            <person name="Stemmann O."/>
            <person name="Mann M."/>
        </authorList>
    </citation>
    <scope>PHOSPHORYLATION [LARGE SCALE ANALYSIS] AT SER-6 AND SER-95</scope>
    <scope>IDENTIFICATION BY MASS SPECTROMETRY [LARGE SCALE ANALYSIS]</scope>
    <source>
        <tissue>Cervix carcinoma</tissue>
    </source>
</reference>
<reference key="5">
    <citation type="journal article" date="2008" name="Proc. Natl. Acad. Sci. U.S.A.">
        <title>A quantitative atlas of mitotic phosphorylation.</title>
        <authorList>
            <person name="Dephoure N."/>
            <person name="Zhou C."/>
            <person name="Villen J."/>
            <person name="Beausoleil S.A."/>
            <person name="Bakalarski C.E."/>
            <person name="Elledge S.J."/>
            <person name="Gygi S.P."/>
        </authorList>
    </citation>
    <scope>PHOSPHORYLATION [LARGE SCALE ANALYSIS] AT SER-95</scope>
    <scope>IDENTIFICATION BY MASS SPECTROMETRY [LARGE SCALE ANALYSIS]</scope>
    <source>
        <tissue>Cervix carcinoma</tissue>
    </source>
</reference>
<reference key="6">
    <citation type="journal article" date="2009" name="Anal. Chem.">
        <title>Lys-N and trypsin cover complementary parts of the phosphoproteome in a refined SCX-based approach.</title>
        <authorList>
            <person name="Gauci S."/>
            <person name="Helbig A.O."/>
            <person name="Slijper M."/>
            <person name="Krijgsveld J."/>
            <person name="Heck A.J."/>
            <person name="Mohammed S."/>
        </authorList>
    </citation>
    <scope>ACETYLATION [LARGE SCALE ANALYSIS] AT SER-2</scope>
    <scope>CLEAVAGE OF INITIATOR METHIONINE [LARGE SCALE ANALYSIS]</scope>
    <scope>IDENTIFICATION BY MASS SPECTROMETRY [LARGE SCALE ANALYSIS]</scope>
</reference>
<reference key="7">
    <citation type="journal article" date="2009" name="Sci. Signal.">
        <title>Quantitative phosphoproteomic analysis of T cell receptor signaling reveals system-wide modulation of protein-protein interactions.</title>
        <authorList>
            <person name="Mayya V."/>
            <person name="Lundgren D.H."/>
            <person name="Hwang S.-I."/>
            <person name="Rezaul K."/>
            <person name="Wu L."/>
            <person name="Eng J.K."/>
            <person name="Rodionov V."/>
            <person name="Han D.K."/>
        </authorList>
    </citation>
    <scope>PHOSPHORYLATION [LARGE SCALE ANALYSIS] AT SER-95</scope>
    <scope>IDENTIFICATION BY MASS SPECTROMETRY [LARGE SCALE ANALYSIS]</scope>
    <source>
        <tissue>Leukemic T-cell</tissue>
    </source>
</reference>
<reference key="8">
    <citation type="journal article" date="2010" name="Sci. Signal.">
        <title>Quantitative phosphoproteomics reveals widespread full phosphorylation site occupancy during mitosis.</title>
        <authorList>
            <person name="Olsen J.V."/>
            <person name="Vermeulen M."/>
            <person name="Santamaria A."/>
            <person name="Kumar C."/>
            <person name="Miller M.L."/>
            <person name="Jensen L.J."/>
            <person name="Gnad F."/>
            <person name="Cox J."/>
            <person name="Jensen T.S."/>
            <person name="Nigg E.A."/>
            <person name="Brunak S."/>
            <person name="Mann M."/>
        </authorList>
    </citation>
    <scope>ACETYLATION [LARGE SCALE ANALYSIS] AT SER-2</scope>
    <scope>PHOSPHORYLATION [LARGE SCALE ANALYSIS] AT SER-6 AND SER-95</scope>
    <scope>CLEAVAGE OF INITIATOR METHIONINE [LARGE SCALE ANALYSIS]</scope>
    <scope>IDENTIFICATION BY MASS SPECTROMETRY [LARGE SCALE ANALYSIS]</scope>
    <source>
        <tissue>Cervix carcinoma</tissue>
    </source>
</reference>
<reference key="9">
    <citation type="journal article" date="2011" name="BMC Syst. Biol.">
        <title>Initial characterization of the human central proteome.</title>
        <authorList>
            <person name="Burkard T.R."/>
            <person name="Planyavsky M."/>
            <person name="Kaupe I."/>
            <person name="Breitwieser F.P."/>
            <person name="Buerckstuemmer T."/>
            <person name="Bennett K.L."/>
            <person name="Superti-Furga G."/>
            <person name="Colinge J."/>
        </authorList>
    </citation>
    <scope>IDENTIFICATION BY MASS SPECTROMETRY [LARGE SCALE ANALYSIS]</scope>
</reference>
<reference key="10">
    <citation type="journal article" date="2011" name="Sci. Signal.">
        <title>System-wide temporal characterization of the proteome and phosphoproteome of human embryonic stem cell differentiation.</title>
        <authorList>
            <person name="Rigbolt K.T."/>
            <person name="Prokhorova T.A."/>
            <person name="Akimov V."/>
            <person name="Henningsen J."/>
            <person name="Johansen P.T."/>
            <person name="Kratchmarova I."/>
            <person name="Kassem M."/>
            <person name="Mann M."/>
            <person name="Olsen J.V."/>
            <person name="Blagoev B."/>
        </authorList>
    </citation>
    <scope>PHOSPHORYLATION [LARGE SCALE ANALYSIS] AT SER-95</scope>
    <scope>IDENTIFICATION BY MASS SPECTROMETRY [LARGE SCALE ANALYSIS]</scope>
</reference>
<reference key="11">
    <citation type="journal article" date="2012" name="Proc. Natl. Acad. Sci. U.S.A.">
        <title>N-terminal acetylome analyses and functional insights of the N-terminal acetyltransferase NatB.</title>
        <authorList>
            <person name="Van Damme P."/>
            <person name="Lasa M."/>
            <person name="Polevoda B."/>
            <person name="Gazquez C."/>
            <person name="Elosegui-Artola A."/>
            <person name="Kim D.S."/>
            <person name="De Juan-Pardo E."/>
            <person name="Demeyer K."/>
            <person name="Hole K."/>
            <person name="Larrea E."/>
            <person name="Timmerman E."/>
            <person name="Prieto J."/>
            <person name="Arnesen T."/>
            <person name="Sherman F."/>
            <person name="Gevaert K."/>
            <person name="Aldabe R."/>
        </authorList>
    </citation>
    <scope>IDENTIFICATION BY MASS SPECTROMETRY [LARGE SCALE ANALYSIS]</scope>
</reference>
<reference key="12">
    <citation type="journal article" date="2013" name="J. Proteome Res.">
        <title>Toward a comprehensive characterization of a human cancer cell phosphoproteome.</title>
        <authorList>
            <person name="Zhou H."/>
            <person name="Di Palma S."/>
            <person name="Preisinger C."/>
            <person name="Peng M."/>
            <person name="Polat A.N."/>
            <person name="Heck A.J."/>
            <person name="Mohammed S."/>
        </authorList>
    </citation>
    <scope>PHOSPHORYLATION [LARGE SCALE ANALYSIS] AT SER-2; SER-6; SER-10 AND SER-95</scope>
    <scope>IDENTIFICATION BY MASS SPECTROMETRY [LARGE SCALE ANALYSIS]</scope>
    <source>
        <tissue>Cervix carcinoma</tissue>
        <tissue>Erythroleukemia</tissue>
    </source>
</reference>
<reference key="13">
    <citation type="journal article" date="2014" name="J. Proteomics">
        <title>An enzyme assisted RP-RPLC approach for in-depth analysis of human liver phosphoproteome.</title>
        <authorList>
            <person name="Bian Y."/>
            <person name="Song C."/>
            <person name="Cheng K."/>
            <person name="Dong M."/>
            <person name="Wang F."/>
            <person name="Huang J."/>
            <person name="Sun D."/>
            <person name="Wang L."/>
            <person name="Ye M."/>
            <person name="Zou H."/>
        </authorList>
    </citation>
    <scope>PHOSPHORYLATION [LARGE SCALE ANALYSIS] AT SER-95</scope>
    <scope>IDENTIFICATION BY MASS SPECTROMETRY [LARGE SCALE ANALYSIS]</scope>
    <source>
        <tissue>Liver</tissue>
    </source>
</reference>
<reference key="14">
    <citation type="journal article" date="2015" name="Hum. Mol. Genet.">
        <title>Biochemical and cellular analysis of Ogden syndrome reveals downstream Nt-acetylation defects.</title>
        <authorList>
            <person name="Myklebust L.M."/>
            <person name="Van Damme P."/>
            <person name="Stoeve S.I."/>
            <person name="Doerfel M.J."/>
            <person name="Abboud A."/>
            <person name="Kalvik T.V."/>
            <person name="Grauffel C."/>
            <person name="Jonckheere V."/>
            <person name="Wu Y."/>
            <person name="Swensen J."/>
            <person name="Kaasa H."/>
            <person name="Liszczak G."/>
            <person name="Marmorstein R."/>
            <person name="Reuter N."/>
            <person name="Lyon G.J."/>
            <person name="Gevaert K."/>
            <person name="Arnesen T."/>
        </authorList>
    </citation>
    <scope>ACETYLATION AT SER-2</scope>
    <scope>CLEAVAGE OF INITIATOR METHIONINE</scope>
</reference>
<reference key="15">
    <citation type="journal article" date="2015" name="Proteomics">
        <title>N-terminome analysis of the human mitochondrial proteome.</title>
        <authorList>
            <person name="Vaca Jacome A.S."/>
            <person name="Rabilloud T."/>
            <person name="Schaeffer-Reiss C."/>
            <person name="Rompais M."/>
            <person name="Ayoub D."/>
            <person name="Lane L."/>
            <person name="Bairoch A."/>
            <person name="Van Dorsselaer A."/>
            <person name="Carapito C."/>
        </authorList>
    </citation>
    <scope>ACETYLATION [LARGE SCALE ANALYSIS] AT SER-2</scope>
    <scope>CLEAVAGE OF INITIATOR METHIONINE [LARGE SCALE ANALYSIS]</scope>
    <scope>IDENTIFICATION BY MASS SPECTROMETRY [LARGE SCALE ANALYSIS]</scope>
</reference>
<accession>O15258</accession>
<accession>O95322</accession>
<comment type="function">
    <text evidence="1">Involved in the retrieval of endoplasmic reticulum membrane proteins from the early Golgi compartment.</text>
</comment>
<comment type="interaction">
    <interactant intactId="EBI-716910">
        <id>O15258</id>
    </interactant>
    <interactant intactId="EBI-745846">
        <id>P57086</id>
        <label>SCAND1</label>
    </interactant>
    <organismsDiffer>false</organismsDiffer>
    <experiments>3</experiments>
</comment>
<comment type="interaction">
    <interactant intactId="EBI-716910">
        <id>O15258</id>
    </interactant>
    <interactant intactId="EBI-10238936">
        <id>Q17RD7</id>
        <label>SYT16</label>
    </interactant>
    <organismsDiffer>false</organismsDiffer>
    <experiments>3</experiments>
</comment>
<comment type="interaction">
    <interactant intactId="EBI-716910">
        <id>O15258</id>
    </interactant>
    <interactant intactId="EBI-12052927">
        <id>O43516-4</id>
        <label>WIPF1</label>
    </interactant>
    <organismsDiffer>false</organismsDiffer>
    <experiments>3</experiments>
</comment>
<comment type="subcellular location">
    <subcellularLocation>
        <location>Golgi apparatus membrane</location>
        <topology>Multi-pass membrane protein</topology>
    </subcellularLocation>
</comment>
<comment type="similarity">
    <text evidence="4">Belongs to the RER1 family.</text>
</comment>
<feature type="initiator methionine" description="Removed" evidence="3 7 9 13">
    <location>
        <position position="1"/>
    </location>
</feature>
<feature type="chain" id="PRO_0000207589" description="Protein RER1">
    <location>
        <begin position="2"/>
        <end position="196"/>
    </location>
</feature>
<feature type="transmembrane region" description="Helical" evidence="2">
    <location>
        <begin position="41"/>
        <end position="61"/>
    </location>
</feature>
<feature type="transmembrane region" description="Helical" evidence="2">
    <location>
        <begin position="63"/>
        <end position="83"/>
    </location>
</feature>
<feature type="transmembrane region" description="Helical" evidence="2">
    <location>
        <begin position="140"/>
        <end position="160"/>
    </location>
</feature>
<feature type="modified residue" description="N-acetylserine" evidence="3 7 9 13">
    <location>
        <position position="2"/>
    </location>
</feature>
<feature type="modified residue" description="Phosphoserine" evidence="11">
    <location>
        <position position="2"/>
    </location>
</feature>
<feature type="modified residue" description="Phosphoserine" evidence="6 9 11">
    <location>
        <position position="6"/>
    </location>
</feature>
<feature type="modified residue" description="Phosphoserine" evidence="11">
    <location>
        <position position="10"/>
    </location>
</feature>
<feature type="modified residue" description="Phosphoserine" evidence="5 6 8 9 10 11 12">
    <location>
        <position position="95"/>
    </location>
</feature>
<feature type="sequence conflict" description="In Ref. 2; AAC72940." evidence="4" ref="2">
    <original>HAATKGILVAMVCTFFDAFNVPVFWPILVMYFIMLFCITMKRQIKHMIKYRYIPFTHGKRRYRGKEDAGKAFAS</original>
    <variation>DASVCGDGRCSCKAGGGRQCPVLAADAALTFSPHLKACGYQGHPCGYGLYFLRRFQRPGVLADSGDVLHHALLYHDEEANQAHD</variation>
    <location>
        <begin position="123"/>
        <end position="196"/>
    </location>
</feature>
<proteinExistence type="evidence at protein level"/>
<gene>
    <name type="primary">RER1</name>
</gene>
<dbReference type="EMBL" id="AJ001421">
    <property type="protein sequence ID" value="CAA04754.1"/>
    <property type="molecule type" value="mRNA"/>
</dbReference>
<dbReference type="EMBL" id="AF091071">
    <property type="protein sequence ID" value="AAC72940.1"/>
    <property type="molecule type" value="mRNA"/>
</dbReference>
<dbReference type="EMBL" id="BC004965">
    <property type="protein sequence ID" value="AAH04965.1"/>
    <property type="molecule type" value="mRNA"/>
</dbReference>
<dbReference type="CCDS" id="CCDS41232.1"/>
<dbReference type="RefSeq" id="NP_008964.3">
    <property type="nucleotide sequence ID" value="NM_007033.4"/>
</dbReference>
<dbReference type="RefSeq" id="XP_006710369.1">
    <property type="nucleotide sequence ID" value="XM_006710306.2"/>
</dbReference>
<dbReference type="RefSeq" id="XP_011538844.1">
    <property type="nucleotide sequence ID" value="XM_011540542.1"/>
</dbReference>
<dbReference type="RefSeq" id="XP_011538845.1">
    <property type="nucleotide sequence ID" value="XM_011540543.1"/>
</dbReference>
<dbReference type="RefSeq" id="XP_016855622.1">
    <property type="nucleotide sequence ID" value="XM_017000133.1"/>
</dbReference>
<dbReference type="RefSeq" id="XP_016855623.1">
    <property type="nucleotide sequence ID" value="XM_017000134.1"/>
</dbReference>
<dbReference type="RefSeq" id="XP_016855624.1">
    <property type="nucleotide sequence ID" value="XM_017000135.1"/>
</dbReference>
<dbReference type="BioGRID" id="116262">
    <property type="interactions" value="192"/>
</dbReference>
<dbReference type="FunCoup" id="O15258">
    <property type="interactions" value="2739"/>
</dbReference>
<dbReference type="IntAct" id="O15258">
    <property type="interactions" value="114"/>
</dbReference>
<dbReference type="MINT" id="O15258"/>
<dbReference type="STRING" id="9606.ENSP00000475168"/>
<dbReference type="TCDB" id="9.B.82.1.2">
    <property type="family name" value="the endoplasmic reticulum retrieval protein1 (putative heavy metal transporter) (rer1) family"/>
</dbReference>
<dbReference type="GlyGen" id="O15258">
    <property type="glycosylation" value="1 site, 1 O-linked glycan (1 site)"/>
</dbReference>
<dbReference type="iPTMnet" id="O15258"/>
<dbReference type="MetOSite" id="O15258"/>
<dbReference type="PhosphoSitePlus" id="O15258"/>
<dbReference type="SwissPalm" id="O15258"/>
<dbReference type="BioMuta" id="RER1"/>
<dbReference type="jPOST" id="O15258"/>
<dbReference type="MassIVE" id="O15258"/>
<dbReference type="PaxDb" id="9606-ENSP00000475168"/>
<dbReference type="PeptideAtlas" id="O15258"/>
<dbReference type="ProteomicsDB" id="48544"/>
<dbReference type="Pumba" id="O15258"/>
<dbReference type="Antibodypedia" id="26719">
    <property type="antibodies" value="90 antibodies from 26 providers"/>
</dbReference>
<dbReference type="DNASU" id="11079"/>
<dbReference type="Ensembl" id="ENST00000488353.2">
    <property type="protein sequence ID" value="ENSP00000464222.1"/>
    <property type="gene ID" value="ENSG00000157916.20"/>
</dbReference>
<dbReference type="Ensembl" id="ENST00000605895.6">
    <property type="protein sequence ID" value="ENSP00000475168.1"/>
    <property type="gene ID" value="ENSG00000157916.20"/>
</dbReference>
<dbReference type="GeneID" id="11079"/>
<dbReference type="KEGG" id="hsa:11079"/>
<dbReference type="MANE-Select" id="ENST00000605895.6">
    <property type="protein sequence ID" value="ENSP00000475168.1"/>
    <property type="RefSeq nucleotide sequence ID" value="NM_007033.5"/>
    <property type="RefSeq protein sequence ID" value="NP_008964.3"/>
</dbReference>
<dbReference type="AGR" id="HGNC:30309"/>
<dbReference type="CTD" id="11079"/>
<dbReference type="DisGeNET" id="11079"/>
<dbReference type="GeneCards" id="RER1"/>
<dbReference type="HGNC" id="HGNC:30309">
    <property type="gene designation" value="RER1"/>
</dbReference>
<dbReference type="HPA" id="ENSG00000157916">
    <property type="expression patterns" value="Low tissue specificity"/>
</dbReference>
<dbReference type="MIM" id="620048">
    <property type="type" value="gene"/>
</dbReference>
<dbReference type="neXtProt" id="NX_O15258"/>
<dbReference type="OpenTargets" id="ENSG00000157916"/>
<dbReference type="PharmGKB" id="PA134901074"/>
<dbReference type="VEuPathDB" id="HostDB:ENSG00000157916"/>
<dbReference type="eggNOG" id="KOG1688">
    <property type="taxonomic scope" value="Eukaryota"/>
</dbReference>
<dbReference type="GeneTree" id="ENSGT00510000047137"/>
<dbReference type="InParanoid" id="O15258"/>
<dbReference type="OMA" id="GWYVVCY"/>
<dbReference type="OrthoDB" id="448250at2759"/>
<dbReference type="PAN-GO" id="O15258">
    <property type="GO annotations" value="3 GO annotations based on evolutionary models"/>
</dbReference>
<dbReference type="PhylomeDB" id="O15258"/>
<dbReference type="TreeFam" id="TF300029"/>
<dbReference type="PathwayCommons" id="O15258"/>
<dbReference type="SignaLink" id="O15258"/>
<dbReference type="BioGRID-ORCS" id="11079">
    <property type="hits" value="93 hits in 1173 CRISPR screens"/>
</dbReference>
<dbReference type="ChiTaRS" id="RER1">
    <property type="organism name" value="human"/>
</dbReference>
<dbReference type="GenomeRNAi" id="11079"/>
<dbReference type="Pharos" id="O15258">
    <property type="development level" value="Tbio"/>
</dbReference>
<dbReference type="PRO" id="PR:O15258"/>
<dbReference type="Proteomes" id="UP000005640">
    <property type="component" value="Chromosome 1"/>
</dbReference>
<dbReference type="RNAct" id="O15258">
    <property type="molecule type" value="protein"/>
</dbReference>
<dbReference type="Bgee" id="ENSG00000157916">
    <property type="expression patterns" value="Expressed in lower esophagus mucosa and 210 other cell types or tissues"/>
</dbReference>
<dbReference type="ExpressionAtlas" id="O15258">
    <property type="expression patterns" value="baseline and differential"/>
</dbReference>
<dbReference type="GO" id="GO:0009986">
    <property type="term" value="C:cell surface"/>
    <property type="evidence" value="ECO:0007669"/>
    <property type="project" value="Ensembl"/>
</dbReference>
<dbReference type="GO" id="GO:0005783">
    <property type="term" value="C:endoplasmic reticulum"/>
    <property type="evidence" value="ECO:0007669"/>
    <property type="project" value="GOC"/>
</dbReference>
<dbReference type="GO" id="GO:0005793">
    <property type="term" value="C:endoplasmic reticulum-Golgi intermediate compartment"/>
    <property type="evidence" value="ECO:0007669"/>
    <property type="project" value="Ensembl"/>
</dbReference>
<dbReference type="GO" id="GO:0005794">
    <property type="term" value="C:Golgi apparatus"/>
    <property type="evidence" value="ECO:0000314"/>
    <property type="project" value="HPA"/>
</dbReference>
<dbReference type="GO" id="GO:0000139">
    <property type="term" value="C:Golgi membrane"/>
    <property type="evidence" value="ECO:0000314"/>
    <property type="project" value="UniProtKB"/>
</dbReference>
<dbReference type="GO" id="GO:0005886">
    <property type="term" value="C:plasma membrane"/>
    <property type="evidence" value="ECO:0007669"/>
    <property type="project" value="GOC"/>
</dbReference>
<dbReference type="GO" id="GO:0033130">
    <property type="term" value="F:acetylcholine receptor binding"/>
    <property type="evidence" value="ECO:0007669"/>
    <property type="project" value="Ensembl"/>
</dbReference>
<dbReference type="GO" id="GO:1903078">
    <property type="term" value="P:positive regulation of protein localization to plasma membrane"/>
    <property type="evidence" value="ECO:0007669"/>
    <property type="project" value="Ensembl"/>
</dbReference>
<dbReference type="GO" id="GO:0006621">
    <property type="term" value="P:protein retention in ER lumen"/>
    <property type="evidence" value="ECO:0000318"/>
    <property type="project" value="GO_Central"/>
</dbReference>
<dbReference type="GO" id="GO:0006890">
    <property type="term" value="P:retrograde vesicle-mediated transport, Golgi to endoplasmic reticulum"/>
    <property type="evidence" value="ECO:0000314"/>
    <property type="project" value="UniProtKB"/>
</dbReference>
<dbReference type="GO" id="GO:0071340">
    <property type="term" value="P:skeletal muscle acetylcholine-gated channel clustering"/>
    <property type="evidence" value="ECO:0007669"/>
    <property type="project" value="Ensembl"/>
</dbReference>
<dbReference type="InterPro" id="IPR004932">
    <property type="entry name" value="Rer1"/>
</dbReference>
<dbReference type="PANTHER" id="PTHR10743">
    <property type="entry name" value="PROTEIN RER1"/>
    <property type="match status" value="1"/>
</dbReference>
<dbReference type="PANTHER" id="PTHR10743:SF0">
    <property type="entry name" value="PROTEIN RER1"/>
    <property type="match status" value="1"/>
</dbReference>
<dbReference type="Pfam" id="PF03248">
    <property type="entry name" value="Rer1"/>
    <property type="match status" value="1"/>
</dbReference>
<dbReference type="PIRSF" id="PIRSF016013">
    <property type="entry name" value="AtER_Rer1p"/>
    <property type="match status" value="1"/>
</dbReference>
<evidence type="ECO:0000250" key="1"/>
<evidence type="ECO:0000255" key="2"/>
<evidence type="ECO:0000269" key="3">
    <source>
    </source>
</evidence>
<evidence type="ECO:0000305" key="4"/>
<evidence type="ECO:0007744" key="5">
    <source>
    </source>
</evidence>
<evidence type="ECO:0007744" key="6">
    <source>
    </source>
</evidence>
<evidence type="ECO:0007744" key="7">
    <source>
    </source>
</evidence>
<evidence type="ECO:0007744" key="8">
    <source>
    </source>
</evidence>
<evidence type="ECO:0007744" key="9">
    <source>
    </source>
</evidence>
<evidence type="ECO:0007744" key="10">
    <source>
    </source>
</evidence>
<evidence type="ECO:0007744" key="11">
    <source>
    </source>
</evidence>
<evidence type="ECO:0007744" key="12">
    <source>
    </source>
</evidence>
<evidence type="ECO:0007744" key="13">
    <source>
    </source>
</evidence>
<sequence>MSEGDSVGESVHGKPSVVYRFFTRLGQIYQSWLDKSTPYTAVRWVVTLGLSFVYMIRVYLLQGWYIVTYALGIYHLNLFIAFLSPKVDPSLMEDSDDGPSLPTKQNEEFRPFIRRLPEFKFWHAATKGILVAMVCTFFDAFNVPVFWPILVMYFIMLFCITMKRQIKHMIKYRYIPFTHGKRRYRGKEDAGKAFAS</sequence>
<keyword id="KW-0007">Acetylation</keyword>
<keyword id="KW-0333">Golgi apparatus</keyword>
<keyword id="KW-0472">Membrane</keyword>
<keyword id="KW-0597">Phosphoprotein</keyword>
<keyword id="KW-1267">Proteomics identification</keyword>
<keyword id="KW-1185">Reference proteome</keyword>
<keyword id="KW-0812">Transmembrane</keyword>
<keyword id="KW-1133">Transmembrane helix</keyword>
<organism>
    <name type="scientific">Homo sapiens</name>
    <name type="common">Human</name>
    <dbReference type="NCBI Taxonomy" id="9606"/>
    <lineage>
        <taxon>Eukaryota</taxon>
        <taxon>Metazoa</taxon>
        <taxon>Chordata</taxon>
        <taxon>Craniata</taxon>
        <taxon>Vertebrata</taxon>
        <taxon>Euteleostomi</taxon>
        <taxon>Mammalia</taxon>
        <taxon>Eutheria</taxon>
        <taxon>Euarchontoglires</taxon>
        <taxon>Primates</taxon>
        <taxon>Haplorrhini</taxon>
        <taxon>Catarrhini</taxon>
        <taxon>Hominidae</taxon>
        <taxon>Homo</taxon>
    </lineage>
</organism>